<proteinExistence type="inferred from homology"/>
<organism>
    <name type="scientific">Bacillus cereus (strain ZK / E33L)</name>
    <dbReference type="NCBI Taxonomy" id="288681"/>
    <lineage>
        <taxon>Bacteria</taxon>
        <taxon>Bacillati</taxon>
        <taxon>Bacillota</taxon>
        <taxon>Bacilli</taxon>
        <taxon>Bacillales</taxon>
        <taxon>Bacillaceae</taxon>
        <taxon>Bacillus</taxon>
        <taxon>Bacillus cereus group</taxon>
    </lineage>
</organism>
<dbReference type="EC" id="7.1.1.-" evidence="1"/>
<dbReference type="EMBL" id="CP000001">
    <property type="protein sequence ID" value="AAU15281.1"/>
    <property type="molecule type" value="Genomic_DNA"/>
</dbReference>
<dbReference type="SMR" id="Q630U9"/>
<dbReference type="KEGG" id="bcz:BCE33L4999"/>
<dbReference type="Proteomes" id="UP000002612">
    <property type="component" value="Chromosome"/>
</dbReference>
<dbReference type="GO" id="GO:0005886">
    <property type="term" value="C:plasma membrane"/>
    <property type="evidence" value="ECO:0007669"/>
    <property type="project" value="UniProtKB-SubCell"/>
</dbReference>
<dbReference type="GO" id="GO:0045271">
    <property type="term" value="C:respiratory chain complex I"/>
    <property type="evidence" value="ECO:0007669"/>
    <property type="project" value="TreeGrafter"/>
</dbReference>
<dbReference type="GO" id="GO:0051539">
    <property type="term" value="F:4 iron, 4 sulfur cluster binding"/>
    <property type="evidence" value="ECO:0007669"/>
    <property type="project" value="UniProtKB-KW"/>
</dbReference>
<dbReference type="GO" id="GO:0005506">
    <property type="term" value="F:iron ion binding"/>
    <property type="evidence" value="ECO:0007669"/>
    <property type="project" value="UniProtKB-UniRule"/>
</dbReference>
<dbReference type="GO" id="GO:0008137">
    <property type="term" value="F:NADH dehydrogenase (ubiquinone) activity"/>
    <property type="evidence" value="ECO:0007669"/>
    <property type="project" value="InterPro"/>
</dbReference>
<dbReference type="GO" id="GO:0050136">
    <property type="term" value="F:NADH:ubiquinone reductase (non-electrogenic) activity"/>
    <property type="evidence" value="ECO:0007669"/>
    <property type="project" value="UniProtKB-UniRule"/>
</dbReference>
<dbReference type="GO" id="GO:0048038">
    <property type="term" value="F:quinone binding"/>
    <property type="evidence" value="ECO:0007669"/>
    <property type="project" value="UniProtKB-KW"/>
</dbReference>
<dbReference type="GO" id="GO:0009060">
    <property type="term" value="P:aerobic respiration"/>
    <property type="evidence" value="ECO:0007669"/>
    <property type="project" value="TreeGrafter"/>
</dbReference>
<dbReference type="GO" id="GO:0015990">
    <property type="term" value="P:electron transport coupled proton transport"/>
    <property type="evidence" value="ECO:0007669"/>
    <property type="project" value="TreeGrafter"/>
</dbReference>
<dbReference type="FunFam" id="3.40.50.12280:FF:000002">
    <property type="entry name" value="NADH-quinone oxidoreductase subunit B"/>
    <property type="match status" value="1"/>
</dbReference>
<dbReference type="Gene3D" id="3.40.50.12280">
    <property type="match status" value="1"/>
</dbReference>
<dbReference type="HAMAP" id="MF_01356">
    <property type="entry name" value="NDH1_NuoB"/>
    <property type="match status" value="1"/>
</dbReference>
<dbReference type="InterPro" id="IPR006137">
    <property type="entry name" value="NADH_UbQ_OxRdtase-like_20kDa"/>
</dbReference>
<dbReference type="InterPro" id="IPR006138">
    <property type="entry name" value="NADH_UQ_OxRdtase_20Kd_su"/>
</dbReference>
<dbReference type="NCBIfam" id="TIGR01957">
    <property type="entry name" value="nuoB_fam"/>
    <property type="match status" value="1"/>
</dbReference>
<dbReference type="NCBIfam" id="NF005012">
    <property type="entry name" value="PRK06411.1"/>
    <property type="match status" value="1"/>
</dbReference>
<dbReference type="PANTHER" id="PTHR11995">
    <property type="entry name" value="NADH DEHYDROGENASE"/>
    <property type="match status" value="1"/>
</dbReference>
<dbReference type="PANTHER" id="PTHR11995:SF14">
    <property type="entry name" value="NADH DEHYDROGENASE [UBIQUINONE] IRON-SULFUR PROTEIN 7, MITOCHONDRIAL"/>
    <property type="match status" value="1"/>
</dbReference>
<dbReference type="Pfam" id="PF01058">
    <property type="entry name" value="Oxidored_q6"/>
    <property type="match status" value="1"/>
</dbReference>
<dbReference type="SUPFAM" id="SSF56770">
    <property type="entry name" value="HydA/Nqo6-like"/>
    <property type="match status" value="1"/>
</dbReference>
<gene>
    <name evidence="1" type="primary">nuoB</name>
    <name type="ordered locus">BCE33L4999</name>
</gene>
<sequence length="179" mass="20001">MEKEGVTMVINFEELHPNERAELERNIFFSTLEQLKGWARSNSLWPMTFGLACCAIEMMGVGSSHYDLDRFGSFFRTSPRQSDVMIVSGTVTKKMAPIVRRLYDQMPEPKWVIAMGSCATAGGPYVNSYAVVKGVDQIVPVDVYIPGCPPNPAALIYGINKLKEKIRYEAKTGKQVTNK</sequence>
<feature type="chain" id="PRO_0000376135" description="NADH-quinone oxidoreductase subunit B">
    <location>
        <begin position="1"/>
        <end position="179"/>
    </location>
</feature>
<feature type="binding site" evidence="1">
    <location>
        <position position="53"/>
    </location>
    <ligand>
        <name>[4Fe-4S] cluster</name>
        <dbReference type="ChEBI" id="CHEBI:49883"/>
    </ligand>
</feature>
<feature type="binding site" evidence="1">
    <location>
        <position position="54"/>
    </location>
    <ligand>
        <name>[4Fe-4S] cluster</name>
        <dbReference type="ChEBI" id="CHEBI:49883"/>
    </ligand>
</feature>
<feature type="binding site" evidence="1">
    <location>
        <position position="118"/>
    </location>
    <ligand>
        <name>[4Fe-4S] cluster</name>
        <dbReference type="ChEBI" id="CHEBI:49883"/>
    </ligand>
</feature>
<feature type="binding site" evidence="1">
    <location>
        <position position="148"/>
    </location>
    <ligand>
        <name>[4Fe-4S] cluster</name>
        <dbReference type="ChEBI" id="CHEBI:49883"/>
    </ligand>
</feature>
<keyword id="KW-0004">4Fe-4S</keyword>
<keyword id="KW-1003">Cell membrane</keyword>
<keyword id="KW-0408">Iron</keyword>
<keyword id="KW-0411">Iron-sulfur</keyword>
<keyword id="KW-0472">Membrane</keyword>
<keyword id="KW-0479">Metal-binding</keyword>
<keyword id="KW-0520">NAD</keyword>
<keyword id="KW-0874">Quinone</keyword>
<keyword id="KW-1278">Translocase</keyword>
<keyword id="KW-0813">Transport</keyword>
<reference key="1">
    <citation type="journal article" date="2006" name="J. Bacteriol.">
        <title>Pathogenomic sequence analysis of Bacillus cereus and Bacillus thuringiensis isolates closely related to Bacillus anthracis.</title>
        <authorList>
            <person name="Han C.S."/>
            <person name="Xie G."/>
            <person name="Challacombe J.F."/>
            <person name="Altherr M.R."/>
            <person name="Bhotika S.S."/>
            <person name="Bruce D."/>
            <person name="Campbell C.S."/>
            <person name="Campbell M.L."/>
            <person name="Chen J."/>
            <person name="Chertkov O."/>
            <person name="Cleland C."/>
            <person name="Dimitrijevic M."/>
            <person name="Doggett N.A."/>
            <person name="Fawcett J.J."/>
            <person name="Glavina T."/>
            <person name="Goodwin L.A."/>
            <person name="Hill K.K."/>
            <person name="Hitchcock P."/>
            <person name="Jackson P.J."/>
            <person name="Keim P."/>
            <person name="Kewalramani A.R."/>
            <person name="Longmire J."/>
            <person name="Lucas S."/>
            <person name="Malfatti S."/>
            <person name="McMurry K."/>
            <person name="Meincke L.J."/>
            <person name="Misra M."/>
            <person name="Moseman B.L."/>
            <person name="Mundt M."/>
            <person name="Munk A.C."/>
            <person name="Okinaka R.T."/>
            <person name="Parson-Quintana B."/>
            <person name="Reilly L.P."/>
            <person name="Richardson P."/>
            <person name="Robinson D.L."/>
            <person name="Rubin E."/>
            <person name="Saunders E."/>
            <person name="Tapia R."/>
            <person name="Tesmer J.G."/>
            <person name="Thayer N."/>
            <person name="Thompson L.S."/>
            <person name="Tice H."/>
            <person name="Ticknor L.O."/>
            <person name="Wills P.L."/>
            <person name="Brettin T.S."/>
            <person name="Gilna P."/>
        </authorList>
    </citation>
    <scope>NUCLEOTIDE SEQUENCE [LARGE SCALE GENOMIC DNA]</scope>
    <source>
        <strain>ZK / E33L</strain>
    </source>
</reference>
<name>NUOB_BACCZ</name>
<comment type="function">
    <text evidence="1">NDH-1 shuttles electrons from NADH, via FMN and iron-sulfur (Fe-S) centers, to quinones in the respiratory chain. The immediate electron acceptor for the enzyme in this species is believed to be a menaquinone. Couples the redox reaction to proton translocation (for every two electrons transferred, four hydrogen ions are translocated across the cytoplasmic membrane), and thus conserves the redox energy in a proton gradient.</text>
</comment>
<comment type="catalytic activity">
    <reaction evidence="1">
        <text>a quinone + NADH + 5 H(+)(in) = a quinol + NAD(+) + 4 H(+)(out)</text>
        <dbReference type="Rhea" id="RHEA:57888"/>
        <dbReference type="ChEBI" id="CHEBI:15378"/>
        <dbReference type="ChEBI" id="CHEBI:24646"/>
        <dbReference type="ChEBI" id="CHEBI:57540"/>
        <dbReference type="ChEBI" id="CHEBI:57945"/>
        <dbReference type="ChEBI" id="CHEBI:132124"/>
    </reaction>
</comment>
<comment type="cofactor">
    <cofactor evidence="1">
        <name>[4Fe-4S] cluster</name>
        <dbReference type="ChEBI" id="CHEBI:49883"/>
    </cofactor>
    <text evidence="1">Binds 1 [4Fe-4S] cluster.</text>
</comment>
<comment type="subunit">
    <text evidence="1">NDH-1 is composed of 14 different subunits. Subunits NuoB, C, D, E, F, and G constitute the peripheral sector of the complex.</text>
</comment>
<comment type="subcellular location">
    <subcellularLocation>
        <location evidence="1">Cell membrane</location>
        <topology evidence="1">Peripheral membrane protein</topology>
        <orientation evidence="1">Cytoplasmic side</orientation>
    </subcellularLocation>
</comment>
<comment type="similarity">
    <text evidence="1">Belongs to the complex I 20 kDa subunit family.</text>
</comment>
<accession>Q630U9</accession>
<evidence type="ECO:0000255" key="1">
    <source>
        <dbReference type="HAMAP-Rule" id="MF_01356"/>
    </source>
</evidence>
<protein>
    <recommendedName>
        <fullName evidence="1">NADH-quinone oxidoreductase subunit B</fullName>
        <ecNumber evidence="1">7.1.1.-</ecNumber>
    </recommendedName>
    <alternativeName>
        <fullName evidence="1">NADH dehydrogenase I subunit B</fullName>
    </alternativeName>
    <alternativeName>
        <fullName evidence="1">NDH-1 subunit B</fullName>
    </alternativeName>
</protein>